<organism>
    <name type="scientific">Yersinia pestis</name>
    <dbReference type="NCBI Taxonomy" id="632"/>
    <lineage>
        <taxon>Bacteria</taxon>
        <taxon>Pseudomonadati</taxon>
        <taxon>Pseudomonadota</taxon>
        <taxon>Gammaproteobacteria</taxon>
        <taxon>Enterobacterales</taxon>
        <taxon>Yersiniaceae</taxon>
        <taxon>Yersinia</taxon>
    </lineage>
</organism>
<evidence type="ECO:0000255" key="1">
    <source>
        <dbReference type="HAMAP-Rule" id="MF_01569"/>
    </source>
</evidence>
<reference key="1">
    <citation type="journal article" date="2001" name="Nature">
        <title>Genome sequence of Yersinia pestis, the causative agent of plague.</title>
        <authorList>
            <person name="Parkhill J."/>
            <person name="Wren B.W."/>
            <person name="Thomson N.R."/>
            <person name="Titball R.W."/>
            <person name="Holden M.T.G."/>
            <person name="Prentice M.B."/>
            <person name="Sebaihia M."/>
            <person name="James K.D."/>
            <person name="Churcher C.M."/>
            <person name="Mungall K.L."/>
            <person name="Baker S."/>
            <person name="Basham D."/>
            <person name="Bentley S.D."/>
            <person name="Brooks K."/>
            <person name="Cerdeno-Tarraga A.-M."/>
            <person name="Chillingworth T."/>
            <person name="Cronin A."/>
            <person name="Davies R.M."/>
            <person name="Davis P."/>
            <person name="Dougan G."/>
            <person name="Feltwell T."/>
            <person name="Hamlin N."/>
            <person name="Holroyd S."/>
            <person name="Jagels K."/>
            <person name="Karlyshev A.V."/>
            <person name="Leather S."/>
            <person name="Moule S."/>
            <person name="Oyston P.C.F."/>
            <person name="Quail M.A."/>
            <person name="Rutherford K.M."/>
            <person name="Simmonds M."/>
            <person name="Skelton J."/>
            <person name="Stevens K."/>
            <person name="Whitehead S."/>
            <person name="Barrell B.G."/>
        </authorList>
    </citation>
    <scope>NUCLEOTIDE SEQUENCE [LARGE SCALE GENOMIC DNA]</scope>
    <source>
        <strain>CO-92 / Biovar Orientalis</strain>
    </source>
</reference>
<reference key="2">
    <citation type="journal article" date="2004" name="DNA Res.">
        <title>Complete genome sequence of Yersinia pestis strain 91001, an isolate avirulent to humans.</title>
        <authorList>
            <person name="Song Y."/>
            <person name="Tong Z."/>
            <person name="Wang J."/>
            <person name="Wang L."/>
            <person name="Guo Z."/>
            <person name="Han Y."/>
            <person name="Zhang J."/>
            <person name="Pei D."/>
            <person name="Zhou D."/>
            <person name="Qin H."/>
            <person name="Pang X."/>
            <person name="Han Y."/>
            <person name="Zhai J."/>
            <person name="Li M."/>
            <person name="Cui B."/>
            <person name="Qi Z."/>
            <person name="Jin L."/>
            <person name="Dai R."/>
            <person name="Chen F."/>
            <person name="Li S."/>
            <person name="Ye C."/>
            <person name="Du Z."/>
            <person name="Lin W."/>
            <person name="Wang J."/>
            <person name="Yu J."/>
            <person name="Yang H."/>
            <person name="Wang J."/>
            <person name="Huang P."/>
            <person name="Yang R."/>
        </authorList>
    </citation>
    <scope>NUCLEOTIDE SEQUENCE [LARGE SCALE GENOMIC DNA]</scope>
    <source>
        <strain>91001 / Biovar Mediaevalis</strain>
    </source>
</reference>
<reference key="3">
    <citation type="journal article" date="2002" name="J. Bacteriol.">
        <title>Genome sequence of Yersinia pestis KIM.</title>
        <authorList>
            <person name="Deng W."/>
            <person name="Burland V."/>
            <person name="Plunkett G. III"/>
            <person name="Boutin A."/>
            <person name="Mayhew G.F."/>
            <person name="Liss P."/>
            <person name="Perna N.T."/>
            <person name="Rose D.J."/>
            <person name="Mau B."/>
            <person name="Zhou S."/>
            <person name="Schwartz D.C."/>
            <person name="Fetherston J.D."/>
            <person name="Lindler L.E."/>
            <person name="Brubaker R.R."/>
            <person name="Plano G.V."/>
            <person name="Straley S.C."/>
            <person name="McDonough K.A."/>
            <person name="Nilles M.L."/>
            <person name="Matson J.S."/>
            <person name="Blattner F.R."/>
            <person name="Perry R.D."/>
        </authorList>
    </citation>
    <scope>NUCLEOTIDE SEQUENCE [LARGE SCALE GENOMIC DNA]</scope>
    <source>
        <strain>KIM10+ / Biovar Mediaevalis</strain>
    </source>
</reference>
<proteinExistence type="inferred from homology"/>
<feature type="chain" id="PRO_0000248823" description="Proline--tRNA ligase">
    <location>
        <begin position="1"/>
        <end position="572"/>
    </location>
</feature>
<comment type="function">
    <text evidence="1">Catalyzes the attachment of proline to tRNA(Pro) in a two-step reaction: proline is first activated by ATP to form Pro-AMP and then transferred to the acceptor end of tRNA(Pro). As ProRS can inadvertently accommodate and process non-cognate amino acids such as alanine and cysteine, to avoid such errors it has two additional distinct editing activities against alanine. One activity is designated as 'pretransfer' editing and involves the tRNA(Pro)-independent hydrolysis of activated Ala-AMP. The other activity is designated 'posttransfer' editing and involves deacylation of mischarged Ala-tRNA(Pro). The misacylated Cys-tRNA(Pro) is not edited by ProRS.</text>
</comment>
<comment type="catalytic activity">
    <reaction evidence="1">
        <text>tRNA(Pro) + L-proline + ATP = L-prolyl-tRNA(Pro) + AMP + diphosphate</text>
        <dbReference type="Rhea" id="RHEA:14305"/>
        <dbReference type="Rhea" id="RHEA-COMP:9700"/>
        <dbReference type="Rhea" id="RHEA-COMP:9702"/>
        <dbReference type="ChEBI" id="CHEBI:30616"/>
        <dbReference type="ChEBI" id="CHEBI:33019"/>
        <dbReference type="ChEBI" id="CHEBI:60039"/>
        <dbReference type="ChEBI" id="CHEBI:78442"/>
        <dbReference type="ChEBI" id="CHEBI:78532"/>
        <dbReference type="ChEBI" id="CHEBI:456215"/>
        <dbReference type="EC" id="6.1.1.15"/>
    </reaction>
</comment>
<comment type="subunit">
    <text evidence="1">Homodimer.</text>
</comment>
<comment type="subcellular location">
    <subcellularLocation>
        <location evidence="1">Cytoplasm</location>
    </subcellularLocation>
</comment>
<comment type="domain">
    <text evidence="1">Consists of three domains: the N-terminal catalytic domain, the editing domain and the C-terminal anticodon-binding domain.</text>
</comment>
<comment type="similarity">
    <text evidence="1">Belongs to the class-II aminoacyl-tRNA synthetase family. ProS type 1 subfamily.</text>
</comment>
<name>SYP_YERPE</name>
<gene>
    <name evidence="1" type="primary">proS</name>
    <name type="ordered locus">YPO1068</name>
    <name type="ordered locus">y3109</name>
    <name type="ordered locus">YP_2781</name>
</gene>
<keyword id="KW-0030">Aminoacyl-tRNA synthetase</keyword>
<keyword id="KW-0067">ATP-binding</keyword>
<keyword id="KW-0963">Cytoplasm</keyword>
<keyword id="KW-0436">Ligase</keyword>
<keyword id="KW-0547">Nucleotide-binding</keyword>
<keyword id="KW-0648">Protein biosynthesis</keyword>
<keyword id="KW-1185">Reference proteome</keyword>
<sequence>MRTSQYLLSTQKETPADAEVISHQLMLRAGMIRKLASGLYTWLPTGVRVLKKVENIVREEMNNAGAIEVSMPVVQPADLWQESGRWEQYGPELLRFVDRGERPFVLGPTHEEVITDLIRGEINSYKQLPLNFFQIQTKFRDEVRPRFGVMRAREFLMKDAYSFHTTQESLQETYDAMYTAYSKIFSRMDLNFRAVLADTGSIGGSASHEFQVLAESGEDDIVFSTGSDYAANIEFAEALAPTEPRAPATEELRIVDTPNAKTIAELVEQFKLPIEKTVKTLLVHAHEESGHKLVALLVRGDHDLNEIKAEKLPQVAKPLTFASEEEIRAAIGAGPGSLGPVNLSLPVIADHSVAVMSDFGAGANIDGKHYFGINWERDLALPLVADLRNVVEGDISPDGKGTLQIKRGIEVGHIFQLGTKYSEVMKATVQGEDGRNQVMTMGCYGIGVSRVVAAAIEQNHDDRGIIWPDAIAPFQVAILPMNMHKSFRVKELAEELYTTLRSHGIDVILDDRKERPGVMFADMELIGVPHNIVIGDRNLDSEEVEYKNRRVGEKQMIKTSEIVEFLLSQIKR</sequence>
<accession>Q7CH25</accession>
<accession>Q74S59</accession>
<dbReference type="EC" id="6.1.1.15" evidence="1"/>
<dbReference type="EMBL" id="AL590842">
    <property type="protein sequence ID" value="CAL19734.1"/>
    <property type="molecule type" value="Genomic_DNA"/>
</dbReference>
<dbReference type="EMBL" id="AE017042">
    <property type="protein sequence ID" value="AAS62965.1"/>
    <property type="molecule type" value="Genomic_DNA"/>
</dbReference>
<dbReference type="EMBL" id="AE009952">
    <property type="protein sequence ID" value="AAM86659.1"/>
    <property type="molecule type" value="Genomic_DNA"/>
</dbReference>
<dbReference type="PIR" id="AD0131">
    <property type="entry name" value="AD0131"/>
</dbReference>
<dbReference type="RefSeq" id="WP_002212156.1">
    <property type="nucleotide sequence ID" value="NZ_WUCK01000035.1"/>
</dbReference>
<dbReference type="RefSeq" id="YP_002346112.1">
    <property type="nucleotide sequence ID" value="NC_003143.1"/>
</dbReference>
<dbReference type="SMR" id="Q7CH25"/>
<dbReference type="IntAct" id="Q7CH25">
    <property type="interactions" value="2"/>
</dbReference>
<dbReference type="STRING" id="214092.YPO1068"/>
<dbReference type="PaxDb" id="214092-YPO1068"/>
<dbReference type="DNASU" id="1148056"/>
<dbReference type="EnsemblBacteria" id="AAS62965">
    <property type="protein sequence ID" value="AAS62965"/>
    <property type="gene ID" value="YP_2781"/>
</dbReference>
<dbReference type="GeneID" id="57977492"/>
<dbReference type="KEGG" id="ype:YPO1068"/>
<dbReference type="KEGG" id="ypk:y3109"/>
<dbReference type="KEGG" id="ypm:YP_2781"/>
<dbReference type="PATRIC" id="fig|214092.21.peg.1357"/>
<dbReference type="eggNOG" id="COG0442">
    <property type="taxonomic scope" value="Bacteria"/>
</dbReference>
<dbReference type="HOGENOM" id="CLU_016739_0_0_6"/>
<dbReference type="OMA" id="NCDYAAN"/>
<dbReference type="OrthoDB" id="9809052at2"/>
<dbReference type="Proteomes" id="UP000000815">
    <property type="component" value="Chromosome"/>
</dbReference>
<dbReference type="Proteomes" id="UP000001019">
    <property type="component" value="Chromosome"/>
</dbReference>
<dbReference type="Proteomes" id="UP000002490">
    <property type="component" value="Chromosome"/>
</dbReference>
<dbReference type="GO" id="GO:0005829">
    <property type="term" value="C:cytosol"/>
    <property type="evidence" value="ECO:0000318"/>
    <property type="project" value="GO_Central"/>
</dbReference>
<dbReference type="GO" id="GO:0002161">
    <property type="term" value="F:aminoacyl-tRNA deacylase activity"/>
    <property type="evidence" value="ECO:0007669"/>
    <property type="project" value="InterPro"/>
</dbReference>
<dbReference type="GO" id="GO:0005524">
    <property type="term" value="F:ATP binding"/>
    <property type="evidence" value="ECO:0007669"/>
    <property type="project" value="UniProtKB-UniRule"/>
</dbReference>
<dbReference type="GO" id="GO:0004827">
    <property type="term" value="F:proline-tRNA ligase activity"/>
    <property type="evidence" value="ECO:0000318"/>
    <property type="project" value="GO_Central"/>
</dbReference>
<dbReference type="GO" id="GO:0006433">
    <property type="term" value="P:prolyl-tRNA aminoacylation"/>
    <property type="evidence" value="ECO:0000318"/>
    <property type="project" value="GO_Central"/>
</dbReference>
<dbReference type="CDD" id="cd04334">
    <property type="entry name" value="ProRS-INS"/>
    <property type="match status" value="1"/>
</dbReference>
<dbReference type="CDD" id="cd00861">
    <property type="entry name" value="ProRS_anticodon_short"/>
    <property type="match status" value="1"/>
</dbReference>
<dbReference type="CDD" id="cd00779">
    <property type="entry name" value="ProRS_core_prok"/>
    <property type="match status" value="1"/>
</dbReference>
<dbReference type="FunFam" id="3.30.930.10:FF:000012">
    <property type="entry name" value="Proline--tRNA ligase"/>
    <property type="match status" value="1"/>
</dbReference>
<dbReference type="FunFam" id="3.30.930.10:FF:000097">
    <property type="entry name" value="Proline--tRNA ligase"/>
    <property type="match status" value="1"/>
</dbReference>
<dbReference type="FunFam" id="3.40.50.800:FF:000006">
    <property type="entry name" value="Proline--tRNA ligase"/>
    <property type="match status" value="1"/>
</dbReference>
<dbReference type="FunFam" id="3.90.960.10:FF:000001">
    <property type="entry name" value="Proline--tRNA ligase"/>
    <property type="match status" value="1"/>
</dbReference>
<dbReference type="Gene3D" id="3.40.50.800">
    <property type="entry name" value="Anticodon-binding domain"/>
    <property type="match status" value="1"/>
</dbReference>
<dbReference type="Gene3D" id="3.30.930.10">
    <property type="entry name" value="Bira Bifunctional Protein, Domain 2"/>
    <property type="match status" value="2"/>
</dbReference>
<dbReference type="Gene3D" id="3.90.960.10">
    <property type="entry name" value="YbaK/aminoacyl-tRNA synthetase-associated domain"/>
    <property type="match status" value="1"/>
</dbReference>
<dbReference type="HAMAP" id="MF_01569">
    <property type="entry name" value="Pro_tRNA_synth_type1"/>
    <property type="match status" value="1"/>
</dbReference>
<dbReference type="InterPro" id="IPR002314">
    <property type="entry name" value="aa-tRNA-synt_IIb"/>
</dbReference>
<dbReference type="InterPro" id="IPR006195">
    <property type="entry name" value="aa-tRNA-synth_II"/>
</dbReference>
<dbReference type="InterPro" id="IPR045864">
    <property type="entry name" value="aa-tRNA-synth_II/BPL/LPL"/>
</dbReference>
<dbReference type="InterPro" id="IPR004154">
    <property type="entry name" value="Anticodon-bd"/>
</dbReference>
<dbReference type="InterPro" id="IPR036621">
    <property type="entry name" value="Anticodon-bd_dom_sf"/>
</dbReference>
<dbReference type="InterPro" id="IPR002316">
    <property type="entry name" value="Pro-tRNA-ligase_IIa"/>
</dbReference>
<dbReference type="InterPro" id="IPR004500">
    <property type="entry name" value="Pro-tRNA-synth_IIa_bac-type"/>
</dbReference>
<dbReference type="InterPro" id="IPR023717">
    <property type="entry name" value="Pro-tRNA-Synthase_IIa_type1"/>
</dbReference>
<dbReference type="InterPro" id="IPR050062">
    <property type="entry name" value="Pro-tRNA_synthetase"/>
</dbReference>
<dbReference type="InterPro" id="IPR044140">
    <property type="entry name" value="ProRS_anticodon_short"/>
</dbReference>
<dbReference type="InterPro" id="IPR033730">
    <property type="entry name" value="ProRS_core_prok"/>
</dbReference>
<dbReference type="InterPro" id="IPR036754">
    <property type="entry name" value="YbaK/aa-tRNA-synt-asso_dom_sf"/>
</dbReference>
<dbReference type="InterPro" id="IPR007214">
    <property type="entry name" value="YbaK/aa-tRNA-synth-assoc-dom"/>
</dbReference>
<dbReference type="NCBIfam" id="NF006625">
    <property type="entry name" value="PRK09194.1"/>
    <property type="match status" value="1"/>
</dbReference>
<dbReference type="NCBIfam" id="TIGR00409">
    <property type="entry name" value="proS_fam_II"/>
    <property type="match status" value="1"/>
</dbReference>
<dbReference type="PANTHER" id="PTHR42753">
    <property type="entry name" value="MITOCHONDRIAL RIBOSOME PROTEIN L39/PROLYL-TRNA LIGASE FAMILY MEMBER"/>
    <property type="match status" value="1"/>
</dbReference>
<dbReference type="PANTHER" id="PTHR42753:SF2">
    <property type="entry name" value="PROLINE--TRNA LIGASE"/>
    <property type="match status" value="1"/>
</dbReference>
<dbReference type="Pfam" id="PF03129">
    <property type="entry name" value="HGTP_anticodon"/>
    <property type="match status" value="1"/>
</dbReference>
<dbReference type="Pfam" id="PF00587">
    <property type="entry name" value="tRNA-synt_2b"/>
    <property type="match status" value="1"/>
</dbReference>
<dbReference type="Pfam" id="PF04073">
    <property type="entry name" value="tRNA_edit"/>
    <property type="match status" value="1"/>
</dbReference>
<dbReference type="PIRSF" id="PIRSF001535">
    <property type="entry name" value="ProRS_1"/>
    <property type="match status" value="1"/>
</dbReference>
<dbReference type="PRINTS" id="PR01046">
    <property type="entry name" value="TRNASYNTHPRO"/>
</dbReference>
<dbReference type="SUPFAM" id="SSF52954">
    <property type="entry name" value="Class II aaRS ABD-related"/>
    <property type="match status" value="1"/>
</dbReference>
<dbReference type="SUPFAM" id="SSF55681">
    <property type="entry name" value="Class II aaRS and biotin synthetases"/>
    <property type="match status" value="1"/>
</dbReference>
<dbReference type="SUPFAM" id="SSF55826">
    <property type="entry name" value="YbaK/ProRS associated domain"/>
    <property type="match status" value="1"/>
</dbReference>
<dbReference type="PROSITE" id="PS50862">
    <property type="entry name" value="AA_TRNA_LIGASE_II"/>
    <property type="match status" value="1"/>
</dbReference>
<protein>
    <recommendedName>
        <fullName evidence="1">Proline--tRNA ligase</fullName>
        <ecNumber evidence="1">6.1.1.15</ecNumber>
    </recommendedName>
    <alternativeName>
        <fullName evidence="1">Prolyl-tRNA synthetase</fullName>
        <shortName evidence="1">ProRS</shortName>
    </alternativeName>
</protein>